<organism>
    <name type="scientific">Oryza sativa subsp. indica</name>
    <name type="common">Rice</name>
    <dbReference type="NCBI Taxonomy" id="39946"/>
    <lineage>
        <taxon>Eukaryota</taxon>
        <taxon>Viridiplantae</taxon>
        <taxon>Streptophyta</taxon>
        <taxon>Embryophyta</taxon>
        <taxon>Tracheophyta</taxon>
        <taxon>Spermatophyta</taxon>
        <taxon>Magnoliopsida</taxon>
        <taxon>Liliopsida</taxon>
        <taxon>Poales</taxon>
        <taxon>Poaceae</taxon>
        <taxon>BOP clade</taxon>
        <taxon>Oryzoideae</taxon>
        <taxon>Oryzeae</taxon>
        <taxon>Oryzinae</taxon>
        <taxon>Oryza</taxon>
        <taxon>Oryza sativa</taxon>
    </lineage>
</organism>
<evidence type="ECO:0000250" key="1"/>
<evidence type="ECO:0000255" key="2">
    <source>
        <dbReference type="PROSITE-ProRule" id="PRU00856"/>
    </source>
</evidence>
<evidence type="ECO:0000256" key="3">
    <source>
        <dbReference type="SAM" id="MobiDB-lite"/>
    </source>
</evidence>
<sequence>MDFDDHDDGDEEMPPMPVSSSYETPPQHGLAGGGMAPKPPGEIGSHVKGPSCGGGRYRECLKNHAVGIGGHAVDGCGEFMAAGEEGTIDALRCAACNCHRNFHRKESESLAGEGSPFSPAAVVPYGATPHHQFSPYYRTPAGYLHHHQHHMAAAAAAAAAAAGGHPQRPLALPSTSHSGRDDGDDLSGMVGPMSAVGPLSGMSLGAGPSGSGSGKKRFRTKFTQEQKDKMLAFAERVGWRIQKHDEAAVQQFCDEVGVKRHVLKVWMHNNKHTLGKKLP</sequence>
<protein>
    <recommendedName>
        <fullName>Zinc-finger homeodomain protein 1</fullName>
    </recommendedName>
</protein>
<accession>A2Z259</accession>
<dbReference type="EMBL" id="CM000134">
    <property type="protein sequence ID" value="EAZ09420.1"/>
    <property type="molecule type" value="Genomic_DNA"/>
</dbReference>
<dbReference type="SMR" id="A2Z259"/>
<dbReference type="STRING" id="39946.A2Z259"/>
<dbReference type="EnsemblPlants" id="BGIOSGA029617-TA">
    <property type="protein sequence ID" value="BGIOSGA029617-PA"/>
    <property type="gene ID" value="BGIOSGA029617"/>
</dbReference>
<dbReference type="EnsemblPlants" id="OsGoSa_09g0013260.01">
    <property type="protein sequence ID" value="OsGoSa_09g0013260.01"/>
    <property type="gene ID" value="OsGoSa_09g0013260"/>
</dbReference>
<dbReference type="EnsemblPlants" id="OsIR64_09g0013380.01">
    <property type="protein sequence ID" value="OsIR64_09g0013380.01"/>
    <property type="gene ID" value="OsIR64_09g0013380"/>
</dbReference>
<dbReference type="EnsemblPlants" id="OsKYG_09g0013170.01">
    <property type="protein sequence ID" value="OsKYG_09g0013170.01"/>
    <property type="gene ID" value="OsKYG_09g0013170"/>
</dbReference>
<dbReference type="EnsemblPlants" id="OsLaMu_09g0013200.01">
    <property type="protein sequence ID" value="OsLaMu_09g0013200.01"/>
    <property type="gene ID" value="OsLaMu_09g0013200"/>
</dbReference>
<dbReference type="EnsemblPlants" id="OsLima_09g0013360.01">
    <property type="protein sequence ID" value="OsLima_09g0013360.01"/>
    <property type="gene ID" value="OsLima_09g0013360"/>
</dbReference>
<dbReference type="EnsemblPlants" id="OsLiXu_09g0013140.01">
    <property type="protein sequence ID" value="OsLiXu_09g0013140.01"/>
    <property type="gene ID" value="OsLiXu_09g0013140"/>
</dbReference>
<dbReference type="EnsemblPlants" id="OsMH63_09G013850_01">
    <property type="protein sequence ID" value="OsMH63_09G013850_01"/>
    <property type="gene ID" value="OsMH63_09G013850"/>
</dbReference>
<dbReference type="EnsemblPlants" id="OsPr106_09g0013480.01">
    <property type="protein sequence ID" value="OsPr106_09g0013480.01"/>
    <property type="gene ID" value="OsPr106_09g0013480"/>
</dbReference>
<dbReference type="EnsemblPlants" id="OsZS97_09G013420_01">
    <property type="protein sequence ID" value="OsZS97_09G013420_01"/>
    <property type="gene ID" value="OsZS97_09G013420"/>
</dbReference>
<dbReference type="Gramene" id="BGIOSGA029617-TA">
    <property type="protein sequence ID" value="BGIOSGA029617-PA"/>
    <property type="gene ID" value="BGIOSGA029617"/>
</dbReference>
<dbReference type="Gramene" id="OsGoSa_09g0013260.01">
    <property type="protein sequence ID" value="OsGoSa_09g0013260.01"/>
    <property type="gene ID" value="OsGoSa_09g0013260"/>
</dbReference>
<dbReference type="Gramene" id="OsIR64_09g0013380.01">
    <property type="protein sequence ID" value="OsIR64_09g0013380.01"/>
    <property type="gene ID" value="OsIR64_09g0013380"/>
</dbReference>
<dbReference type="Gramene" id="OsKYG_09g0013170.01">
    <property type="protein sequence ID" value="OsKYG_09g0013170.01"/>
    <property type="gene ID" value="OsKYG_09g0013170"/>
</dbReference>
<dbReference type="Gramene" id="OsLaMu_09g0013200.01">
    <property type="protein sequence ID" value="OsLaMu_09g0013200.01"/>
    <property type="gene ID" value="OsLaMu_09g0013200"/>
</dbReference>
<dbReference type="Gramene" id="OsLima_09g0013360.01">
    <property type="protein sequence ID" value="OsLima_09g0013360.01"/>
    <property type="gene ID" value="OsLima_09g0013360"/>
</dbReference>
<dbReference type="Gramene" id="OsLiXu_09g0013140.01">
    <property type="protein sequence ID" value="OsLiXu_09g0013140.01"/>
    <property type="gene ID" value="OsLiXu_09g0013140"/>
</dbReference>
<dbReference type="Gramene" id="OsMH63_09G013850_01">
    <property type="protein sequence ID" value="OsMH63_09G013850_01"/>
    <property type="gene ID" value="OsMH63_09G013850"/>
</dbReference>
<dbReference type="Gramene" id="OsPr106_09g0013480.01">
    <property type="protein sequence ID" value="OsPr106_09g0013480.01"/>
    <property type="gene ID" value="OsPr106_09g0013480"/>
</dbReference>
<dbReference type="Gramene" id="OsZS97_09G013420_01">
    <property type="protein sequence ID" value="OsZS97_09G013420_01"/>
    <property type="gene ID" value="OsZS97_09G013420"/>
</dbReference>
<dbReference type="HOGENOM" id="CLU_039237_2_2_1"/>
<dbReference type="OMA" id="CNDTGVK"/>
<dbReference type="OrthoDB" id="1921929at2759"/>
<dbReference type="Proteomes" id="UP000007015">
    <property type="component" value="Chromosome 9"/>
</dbReference>
<dbReference type="GO" id="GO:0005634">
    <property type="term" value="C:nucleus"/>
    <property type="evidence" value="ECO:0007669"/>
    <property type="project" value="UniProtKB-SubCell"/>
</dbReference>
<dbReference type="GO" id="GO:0003700">
    <property type="term" value="F:DNA-binding transcription factor activity"/>
    <property type="evidence" value="ECO:0007669"/>
    <property type="project" value="TreeGrafter"/>
</dbReference>
<dbReference type="GO" id="GO:0000976">
    <property type="term" value="F:transcription cis-regulatory region binding"/>
    <property type="evidence" value="ECO:0007669"/>
    <property type="project" value="TreeGrafter"/>
</dbReference>
<dbReference type="GO" id="GO:0008270">
    <property type="term" value="F:zinc ion binding"/>
    <property type="evidence" value="ECO:0007669"/>
    <property type="project" value="UniProtKB-KW"/>
</dbReference>
<dbReference type="GO" id="GO:0050793">
    <property type="term" value="P:regulation of developmental process"/>
    <property type="evidence" value="ECO:0007669"/>
    <property type="project" value="TreeGrafter"/>
</dbReference>
<dbReference type="FunFam" id="1.10.10.60:FF:000257">
    <property type="entry name" value="Zinc-finger homeodomain protein 2"/>
    <property type="match status" value="1"/>
</dbReference>
<dbReference type="Gene3D" id="1.10.10.60">
    <property type="entry name" value="Homeodomain-like"/>
    <property type="match status" value="1"/>
</dbReference>
<dbReference type="InterPro" id="IPR009057">
    <property type="entry name" value="Homeodomain-like_sf"/>
</dbReference>
<dbReference type="InterPro" id="IPR006455">
    <property type="entry name" value="Homeodomain_ZF_HD"/>
</dbReference>
<dbReference type="InterPro" id="IPR006456">
    <property type="entry name" value="ZF_HD_homeobox_Cys/His_dimer"/>
</dbReference>
<dbReference type="NCBIfam" id="TIGR01565">
    <property type="entry name" value="homeo_ZF_HD"/>
    <property type="match status" value="1"/>
</dbReference>
<dbReference type="NCBIfam" id="TIGR01566">
    <property type="entry name" value="ZF_HD_prot_N"/>
    <property type="match status" value="1"/>
</dbReference>
<dbReference type="PANTHER" id="PTHR31948">
    <property type="entry name" value="ZINC-FINGER HOMEODOMAIN PROTEIN 2"/>
    <property type="match status" value="1"/>
</dbReference>
<dbReference type="PANTHER" id="PTHR31948:SF140">
    <property type="entry name" value="ZINC-FINGER HOMEODOMAIN PROTEIN 2"/>
    <property type="match status" value="1"/>
</dbReference>
<dbReference type="Pfam" id="PF04770">
    <property type="entry name" value="ZF-HD_dimer"/>
    <property type="match status" value="1"/>
</dbReference>
<dbReference type="SUPFAM" id="SSF46689">
    <property type="entry name" value="Homeodomain-like"/>
    <property type="match status" value="1"/>
</dbReference>
<dbReference type="PROSITE" id="PS51523">
    <property type="entry name" value="ZF_HD_DIMER"/>
    <property type="match status" value="1"/>
</dbReference>
<gene>
    <name type="primary">ZHD1</name>
    <name type="ORF">OsI_31693</name>
</gene>
<proteinExistence type="inferred from homology"/>
<reference key="1">
    <citation type="journal article" date="2005" name="PLoS Biol.">
        <title>The genomes of Oryza sativa: a history of duplications.</title>
        <authorList>
            <person name="Yu J."/>
            <person name="Wang J."/>
            <person name="Lin W."/>
            <person name="Li S."/>
            <person name="Li H."/>
            <person name="Zhou J."/>
            <person name="Ni P."/>
            <person name="Dong W."/>
            <person name="Hu S."/>
            <person name="Zeng C."/>
            <person name="Zhang J."/>
            <person name="Zhang Y."/>
            <person name="Li R."/>
            <person name="Xu Z."/>
            <person name="Li S."/>
            <person name="Li X."/>
            <person name="Zheng H."/>
            <person name="Cong L."/>
            <person name="Lin L."/>
            <person name="Yin J."/>
            <person name="Geng J."/>
            <person name="Li G."/>
            <person name="Shi J."/>
            <person name="Liu J."/>
            <person name="Lv H."/>
            <person name="Li J."/>
            <person name="Wang J."/>
            <person name="Deng Y."/>
            <person name="Ran L."/>
            <person name="Shi X."/>
            <person name="Wang X."/>
            <person name="Wu Q."/>
            <person name="Li C."/>
            <person name="Ren X."/>
            <person name="Wang J."/>
            <person name="Wang X."/>
            <person name="Li D."/>
            <person name="Liu D."/>
            <person name="Zhang X."/>
            <person name="Ji Z."/>
            <person name="Zhao W."/>
            <person name="Sun Y."/>
            <person name="Zhang Z."/>
            <person name="Bao J."/>
            <person name="Han Y."/>
            <person name="Dong L."/>
            <person name="Ji J."/>
            <person name="Chen P."/>
            <person name="Wu S."/>
            <person name="Liu J."/>
            <person name="Xiao Y."/>
            <person name="Bu D."/>
            <person name="Tan J."/>
            <person name="Yang L."/>
            <person name="Ye C."/>
            <person name="Zhang J."/>
            <person name="Xu J."/>
            <person name="Zhou Y."/>
            <person name="Yu Y."/>
            <person name="Zhang B."/>
            <person name="Zhuang S."/>
            <person name="Wei H."/>
            <person name="Liu B."/>
            <person name="Lei M."/>
            <person name="Yu H."/>
            <person name="Li Y."/>
            <person name="Xu H."/>
            <person name="Wei S."/>
            <person name="He X."/>
            <person name="Fang L."/>
            <person name="Zhang Z."/>
            <person name="Zhang Y."/>
            <person name="Huang X."/>
            <person name="Su Z."/>
            <person name="Tong W."/>
            <person name="Li J."/>
            <person name="Tong Z."/>
            <person name="Li S."/>
            <person name="Ye J."/>
            <person name="Wang L."/>
            <person name="Fang L."/>
            <person name="Lei T."/>
            <person name="Chen C.-S."/>
            <person name="Chen H.-C."/>
            <person name="Xu Z."/>
            <person name="Li H."/>
            <person name="Huang H."/>
            <person name="Zhang F."/>
            <person name="Xu H."/>
            <person name="Li N."/>
            <person name="Zhao C."/>
            <person name="Li S."/>
            <person name="Dong L."/>
            <person name="Huang Y."/>
            <person name="Li L."/>
            <person name="Xi Y."/>
            <person name="Qi Q."/>
            <person name="Li W."/>
            <person name="Zhang B."/>
            <person name="Hu W."/>
            <person name="Zhang Y."/>
            <person name="Tian X."/>
            <person name="Jiao Y."/>
            <person name="Liang X."/>
            <person name="Jin J."/>
            <person name="Gao L."/>
            <person name="Zheng W."/>
            <person name="Hao B."/>
            <person name="Liu S.-M."/>
            <person name="Wang W."/>
            <person name="Yuan L."/>
            <person name="Cao M."/>
            <person name="McDermott J."/>
            <person name="Samudrala R."/>
            <person name="Wang J."/>
            <person name="Wong G.K.-S."/>
            <person name="Yang H."/>
        </authorList>
    </citation>
    <scope>NUCLEOTIDE SEQUENCE [LARGE SCALE GENOMIC DNA]</scope>
    <source>
        <strain>cv. 93-11</strain>
    </source>
</reference>
<feature type="chain" id="PRO_0000426036" description="Zinc-finger homeodomain protein 1">
    <location>
        <begin position="1"/>
        <end position="279"/>
    </location>
</feature>
<feature type="zinc finger region" description="ZF-HD dimerization-type; degenerate" evidence="2">
    <location>
        <begin position="57"/>
        <end position="106"/>
    </location>
</feature>
<feature type="DNA-binding region" description="Homeobox">
    <location>
        <begin position="215"/>
        <end position="278"/>
    </location>
</feature>
<feature type="region of interest" description="Disordered" evidence="3">
    <location>
        <begin position="1"/>
        <end position="47"/>
    </location>
</feature>
<feature type="region of interest" description="Disordered" evidence="3">
    <location>
        <begin position="157"/>
        <end position="191"/>
    </location>
</feature>
<feature type="compositionally biased region" description="Acidic residues" evidence="3">
    <location>
        <begin position="1"/>
        <end position="13"/>
    </location>
</feature>
<feature type="site" description="Required for DNA-binding" evidence="1">
    <location>
        <position position="267"/>
    </location>
</feature>
<keyword id="KW-0238">DNA-binding</keyword>
<keyword id="KW-0371">Homeobox</keyword>
<keyword id="KW-0479">Metal-binding</keyword>
<keyword id="KW-0539">Nucleus</keyword>
<keyword id="KW-1185">Reference proteome</keyword>
<keyword id="KW-0804">Transcription</keyword>
<keyword id="KW-0805">Transcription regulation</keyword>
<keyword id="KW-0862">Zinc</keyword>
<keyword id="KW-0863">Zinc-finger</keyword>
<name>ZHD1_ORYSI</name>
<comment type="function">
    <text evidence="1">Putative transcription factor.</text>
</comment>
<comment type="subunit">
    <text evidence="1">Homo- and heterodimer with other ZFHD proteins.</text>
</comment>
<comment type="subcellular location">
    <subcellularLocation>
        <location evidence="1">Nucleus</location>
    </subcellularLocation>
</comment>
<comment type="domain">
    <text>The homeodomain differs form the typical one by having namely 4 instead of 3 extra amino acids inserted in the loop between helix 1 and helix 2.</text>
</comment>